<protein>
    <recommendedName>
        <fullName evidence="2">Ornithine carbamoyltransferase</fullName>
        <shortName evidence="2">OTCase</shortName>
        <ecNumber evidence="2">2.1.3.3</ecNumber>
    </recommendedName>
</protein>
<organism>
    <name type="scientific">Borreliella afzelii (strain PKo)</name>
    <name type="common">Borrelia afzelii</name>
    <dbReference type="NCBI Taxonomy" id="390236"/>
    <lineage>
        <taxon>Bacteria</taxon>
        <taxon>Pseudomonadati</taxon>
        <taxon>Spirochaetota</taxon>
        <taxon>Spirochaetia</taxon>
        <taxon>Spirochaetales</taxon>
        <taxon>Borreliaceae</taxon>
        <taxon>Borreliella</taxon>
    </lineage>
</organism>
<keyword id="KW-0056">Arginine metabolism</keyword>
<keyword id="KW-0963">Cytoplasm</keyword>
<keyword id="KW-0808">Transferase</keyword>
<gene>
    <name evidence="2" type="primary">arcB</name>
    <name type="ordered locus">BAPKO_0897</name>
    <name type="ordered locus">BafPKo_0870</name>
</gene>
<sequence length="328" mass="36561">MYNLRNRSFLNLLDFTSKDIKYLLDLSIDLKKSKYAGIEVQKLKGKNIVIIFEKDSTRTRCAFEIAAYDQGANITYLGPKGNQIGVKESMKDTARVLGRMYDAIGFRGFSQETVECLANYSNVPVYNGLTDISHPTQILADLMTIKEHKGSLKGIKIVFCGDGRGNIANSLLKGCAIMGLDFRIFAPKELFPDSNLTLKAKSLALKSGGKITITDSKEEAVKCADVVYTDVWVSMGEESNWEDRINLLKLYQVNKELMCMAKDDAIFMHCLPAFHDLSTVVGRDIFDKYGLDGIEVTEEIFESKNSVVFDVAENRVHAIKAVMVSTLG</sequence>
<proteinExistence type="inferred from homology"/>
<feature type="chain" id="PRO_1000065075" description="Ornithine carbamoyltransferase">
    <location>
        <begin position="1"/>
        <end position="328"/>
    </location>
</feature>
<feature type="binding site" evidence="2">
    <location>
        <begin position="56"/>
        <end position="59"/>
    </location>
    <ligand>
        <name>carbamoyl phosphate</name>
        <dbReference type="ChEBI" id="CHEBI:58228"/>
    </ligand>
</feature>
<feature type="binding site" evidence="2">
    <location>
        <position position="83"/>
    </location>
    <ligand>
        <name>carbamoyl phosphate</name>
        <dbReference type="ChEBI" id="CHEBI:58228"/>
    </ligand>
</feature>
<feature type="binding site" evidence="2">
    <location>
        <position position="107"/>
    </location>
    <ligand>
        <name>carbamoyl phosphate</name>
        <dbReference type="ChEBI" id="CHEBI:58228"/>
    </ligand>
</feature>
<feature type="binding site" evidence="2">
    <location>
        <begin position="134"/>
        <end position="137"/>
    </location>
    <ligand>
        <name>carbamoyl phosphate</name>
        <dbReference type="ChEBI" id="CHEBI:58228"/>
    </ligand>
</feature>
<feature type="binding site" evidence="2">
    <location>
        <position position="166"/>
    </location>
    <ligand>
        <name>L-ornithine</name>
        <dbReference type="ChEBI" id="CHEBI:46911"/>
    </ligand>
</feature>
<feature type="binding site" evidence="2">
    <location>
        <position position="230"/>
    </location>
    <ligand>
        <name>L-ornithine</name>
        <dbReference type="ChEBI" id="CHEBI:46911"/>
    </ligand>
</feature>
<feature type="binding site" evidence="2">
    <location>
        <begin position="234"/>
        <end position="235"/>
    </location>
    <ligand>
        <name>L-ornithine</name>
        <dbReference type="ChEBI" id="CHEBI:46911"/>
    </ligand>
</feature>
<feature type="binding site" evidence="2">
    <location>
        <begin position="270"/>
        <end position="271"/>
    </location>
    <ligand>
        <name>carbamoyl phosphate</name>
        <dbReference type="ChEBI" id="CHEBI:58228"/>
    </ligand>
</feature>
<feature type="binding site" evidence="2">
    <location>
        <position position="315"/>
    </location>
    <ligand>
        <name>carbamoyl phosphate</name>
        <dbReference type="ChEBI" id="CHEBI:58228"/>
    </ligand>
</feature>
<name>OTC_BORAP</name>
<comment type="function">
    <text evidence="1">Reversibly catalyzes the transfer of the carbamoyl group from carbamoyl phosphate (CP) to the N(epsilon) atom of ornithine (ORN) to produce L-citrulline.</text>
</comment>
<comment type="catalytic activity">
    <reaction evidence="2">
        <text>carbamoyl phosphate + L-ornithine = L-citrulline + phosphate + H(+)</text>
        <dbReference type="Rhea" id="RHEA:19513"/>
        <dbReference type="ChEBI" id="CHEBI:15378"/>
        <dbReference type="ChEBI" id="CHEBI:43474"/>
        <dbReference type="ChEBI" id="CHEBI:46911"/>
        <dbReference type="ChEBI" id="CHEBI:57743"/>
        <dbReference type="ChEBI" id="CHEBI:58228"/>
        <dbReference type="EC" id="2.1.3.3"/>
    </reaction>
</comment>
<comment type="pathway">
    <text evidence="2">Amino-acid degradation; L-arginine degradation via ADI pathway; carbamoyl phosphate from L-arginine: step 2/2.</text>
</comment>
<comment type="subcellular location">
    <subcellularLocation>
        <location evidence="2">Cytoplasm</location>
    </subcellularLocation>
</comment>
<comment type="similarity">
    <text evidence="2">Belongs to the aspartate/ornithine carbamoyltransferase superfamily. OTCase family.</text>
</comment>
<dbReference type="EC" id="2.1.3.3" evidence="2"/>
<dbReference type="EMBL" id="CP000395">
    <property type="protein sequence ID" value="ABH02121.1"/>
    <property type="molecule type" value="Genomic_DNA"/>
</dbReference>
<dbReference type="EMBL" id="CP002933">
    <property type="protein sequence ID" value="AEL70059.1"/>
    <property type="molecule type" value="Genomic_DNA"/>
</dbReference>
<dbReference type="RefSeq" id="WP_011601269.1">
    <property type="nucleotide sequence ID" value="NC_008277.1"/>
</dbReference>
<dbReference type="SMR" id="Q0SM07"/>
<dbReference type="STRING" id="29518.BLA32_00010"/>
<dbReference type="KEGG" id="baf:BAPKO_0897"/>
<dbReference type="KEGG" id="bafz:BafPKo_0870"/>
<dbReference type="PATRIC" id="fig|390236.22.peg.831"/>
<dbReference type="eggNOG" id="COG0078">
    <property type="taxonomic scope" value="Bacteria"/>
</dbReference>
<dbReference type="HOGENOM" id="CLU_043846_3_1_12"/>
<dbReference type="OrthoDB" id="9802587at2"/>
<dbReference type="UniPathway" id="UPA00254">
    <property type="reaction ID" value="UER00365"/>
</dbReference>
<dbReference type="Proteomes" id="UP000005216">
    <property type="component" value="Chromosome"/>
</dbReference>
<dbReference type="GO" id="GO:0005737">
    <property type="term" value="C:cytoplasm"/>
    <property type="evidence" value="ECO:0007669"/>
    <property type="project" value="UniProtKB-SubCell"/>
</dbReference>
<dbReference type="GO" id="GO:0016597">
    <property type="term" value="F:amino acid binding"/>
    <property type="evidence" value="ECO:0007669"/>
    <property type="project" value="InterPro"/>
</dbReference>
<dbReference type="GO" id="GO:0004585">
    <property type="term" value="F:ornithine carbamoyltransferase activity"/>
    <property type="evidence" value="ECO:0007669"/>
    <property type="project" value="UniProtKB-UniRule"/>
</dbReference>
<dbReference type="GO" id="GO:0042450">
    <property type="term" value="P:arginine biosynthetic process via ornithine"/>
    <property type="evidence" value="ECO:0007669"/>
    <property type="project" value="TreeGrafter"/>
</dbReference>
<dbReference type="GO" id="GO:0019547">
    <property type="term" value="P:arginine catabolic process to ornithine"/>
    <property type="evidence" value="ECO:0007669"/>
    <property type="project" value="UniProtKB-UniRule"/>
</dbReference>
<dbReference type="GO" id="GO:0019240">
    <property type="term" value="P:citrulline biosynthetic process"/>
    <property type="evidence" value="ECO:0007669"/>
    <property type="project" value="TreeGrafter"/>
</dbReference>
<dbReference type="FunFam" id="3.40.50.1370:FF:000008">
    <property type="entry name" value="Ornithine carbamoyltransferase"/>
    <property type="match status" value="1"/>
</dbReference>
<dbReference type="Gene3D" id="3.40.50.1370">
    <property type="entry name" value="Aspartate/ornithine carbamoyltransferase"/>
    <property type="match status" value="2"/>
</dbReference>
<dbReference type="HAMAP" id="MF_01109">
    <property type="entry name" value="OTCase"/>
    <property type="match status" value="1"/>
</dbReference>
<dbReference type="InterPro" id="IPR006132">
    <property type="entry name" value="Asp/Orn_carbamoyltranf_P-bd"/>
</dbReference>
<dbReference type="InterPro" id="IPR006130">
    <property type="entry name" value="Asp/Orn_carbamoylTrfase"/>
</dbReference>
<dbReference type="InterPro" id="IPR036901">
    <property type="entry name" value="Asp/Orn_carbamoylTrfase_sf"/>
</dbReference>
<dbReference type="InterPro" id="IPR006131">
    <property type="entry name" value="Asp_carbamoyltransf_Asp/Orn-bd"/>
</dbReference>
<dbReference type="InterPro" id="IPR002292">
    <property type="entry name" value="Orn/put_carbamltrans"/>
</dbReference>
<dbReference type="InterPro" id="IPR024904">
    <property type="entry name" value="OTCase_ArgI"/>
</dbReference>
<dbReference type="NCBIfam" id="TIGR00658">
    <property type="entry name" value="orni_carb_tr"/>
    <property type="match status" value="1"/>
</dbReference>
<dbReference type="NCBIfam" id="NF001986">
    <property type="entry name" value="PRK00779.1"/>
    <property type="match status" value="1"/>
</dbReference>
<dbReference type="NCBIfam" id="NF003286">
    <property type="entry name" value="PRK04284.1"/>
    <property type="match status" value="1"/>
</dbReference>
<dbReference type="PANTHER" id="PTHR45753:SF2">
    <property type="entry name" value="ORNITHINE CARBAMOYLTRANSFERASE"/>
    <property type="match status" value="1"/>
</dbReference>
<dbReference type="PANTHER" id="PTHR45753">
    <property type="entry name" value="ORNITHINE CARBAMOYLTRANSFERASE, MITOCHONDRIAL"/>
    <property type="match status" value="1"/>
</dbReference>
<dbReference type="Pfam" id="PF00185">
    <property type="entry name" value="OTCace"/>
    <property type="match status" value="1"/>
</dbReference>
<dbReference type="Pfam" id="PF02729">
    <property type="entry name" value="OTCace_N"/>
    <property type="match status" value="1"/>
</dbReference>
<dbReference type="PRINTS" id="PR00100">
    <property type="entry name" value="AOTCASE"/>
</dbReference>
<dbReference type="PRINTS" id="PR00102">
    <property type="entry name" value="OTCASE"/>
</dbReference>
<dbReference type="SUPFAM" id="SSF53671">
    <property type="entry name" value="Aspartate/ornithine carbamoyltransferase"/>
    <property type="match status" value="1"/>
</dbReference>
<dbReference type="PROSITE" id="PS00097">
    <property type="entry name" value="CARBAMOYLTRANSFERASE"/>
    <property type="match status" value="1"/>
</dbReference>
<reference key="1">
    <citation type="journal article" date="2006" name="BMC Genomics">
        <title>Comparative genome analysis: selection pressure on the Borrelia vls cassettes is essential for infectivity.</title>
        <authorList>
            <person name="Gloeckner G."/>
            <person name="Schulte-Spechtel U."/>
            <person name="Schilhabel M."/>
            <person name="Felder M."/>
            <person name="Suehnel J."/>
            <person name="Wilske B."/>
            <person name="Platzer M."/>
        </authorList>
    </citation>
    <scope>NUCLEOTIDE SEQUENCE [LARGE SCALE GENOMIC DNA]</scope>
    <source>
        <strain>PKo</strain>
    </source>
</reference>
<reference key="2">
    <citation type="journal article" date="2011" name="J. Bacteriol.">
        <title>Whole-genome sequences of two Borrelia afzelii and two Borrelia garinii Lyme disease agent isolates.</title>
        <authorList>
            <person name="Casjens S.R."/>
            <person name="Mongodin E.F."/>
            <person name="Qiu W.G."/>
            <person name="Dunn J.J."/>
            <person name="Luft B.J."/>
            <person name="Fraser-Liggett C.M."/>
            <person name="Schutzer S.E."/>
        </authorList>
    </citation>
    <scope>NUCLEOTIDE SEQUENCE [LARGE SCALE GENOMIC DNA] OF 1-206</scope>
    <source>
        <strain>PKo</strain>
    </source>
</reference>
<accession>Q0SM07</accession>
<accession>G0IQN4</accession>
<evidence type="ECO:0000250" key="1"/>
<evidence type="ECO:0000255" key="2">
    <source>
        <dbReference type="HAMAP-Rule" id="MF_01109"/>
    </source>
</evidence>